<sequence>METYQQMNSGSGPRSVGTPQGQYMDVGEMPPMDAKQQTMLWQQNQYMGDSGIQSGATTQAPPSVSSKHGLDDMDTGEGMDTSRMMFDFDQGFSTQAFTQEQVDEMNQQLNQTRSQRVRAAMFPETLEEGVQIPSTQLDPGQPTAVQRLSEPSQMLKHAVVNLINYQDDADLATRAIPELTKLLNDEDQVVVSQAAMMVHQLSKKEASRHAIMNSPQMVAALVRAMTNTNDLETTRCAAGTLHNLSHHRQGLLTIFKSGGIPALVKLLSSPVESVLFYAITTLHNLLLHQEGSKMAVRLAGGLQKMVLLLQRNNLKFLAITTDCLQILAYGNQESKLIILASGGPGELVRIMRSYTYEKLLWTTSRVLKVLSVCASNKPAIVEAGSAGPSMHLGHQSQRLVQNCLWTLRNLSDAATKSSDIEGLLQMLVQLLASNDINIVTCAAGILSNLTCNNQRNKVTVCQVGGIEALVRTILQAGDREDITEPAVCALRHLTSRHGEAEMAQNAVRLHYGLPVLVKLLHPPSRWPLIKAVVGLIRNLALCPANHAPLREHGAIPRIVQLLIRAHQDTQRRATAGSGNTSAYVDGVRMEEIVEGTVGALHIMAREAHNRAVIRGLNCISLFAQLLYSPIDNIQRVAAGVLCELAADKEGAEMIEQEGTTAPLTELLHSRNEGVATYAAAVLFRMSEDKPQDYKKRLSVELTSSLFRGEQVPWGEPPGLDDMDSSQLLPEEQGFRGYQGSGPGSVPSGPPHDMNRQDSMQGLELGSQQGTAYGSHMPDLGPNTDLHFDPMDGGGSSMGGPHTPTDPQNQMAAWFDTDL</sequence>
<comment type="function">
    <text>Binds to the cytoplasmic domain of the cell-cell adhesion molecule E-cadherin, and perhaps to other (membrane) proteins. The association of catenins to cadherins produces a complex which is linked to the actin filament network, and which seems to be of primary importance for cadherins cell-adhesion properties.</text>
</comment>
<comment type="subcellular location">
    <subcellularLocation>
        <location evidence="1">Cytoplasm</location>
    </subcellularLocation>
    <subcellularLocation>
        <location evidence="1">Cytoplasm</location>
        <location evidence="1">Cytoskeleton</location>
    </subcellularLocation>
</comment>
<comment type="similarity">
    <text evidence="3">Belongs to the beta-catenin family.</text>
</comment>
<name>CTNB_URECA</name>
<proteinExistence type="evidence at transcript level"/>
<evidence type="ECO:0000250" key="1"/>
<evidence type="ECO:0000256" key="2">
    <source>
        <dbReference type="SAM" id="MobiDB-lite"/>
    </source>
</evidence>
<evidence type="ECO:0000305" key="3"/>
<reference key="1">
    <citation type="journal article" date="1993" name="Biochim. Biophys. Acta">
        <title>Identification of homologues to beta-catenin/plakoglobin/armadillo in two invertebrates, Urechis caupo and Tripneustes gratilla.</title>
        <authorList>
            <person name="Rosenthal E.T."/>
        </authorList>
    </citation>
    <scope>NUCLEOTIDE SEQUENCE [MRNA]</scope>
</reference>
<feature type="chain" id="PRO_0000064275" description="Catenin beta">
    <location>
        <begin position="1"/>
        <end position="818"/>
    </location>
</feature>
<feature type="repeat" description="ARM 1">
    <location>
        <begin position="164"/>
        <end position="203"/>
    </location>
</feature>
<feature type="repeat" description="ARM 2">
    <location>
        <begin position="248"/>
        <end position="287"/>
    </location>
</feature>
<feature type="repeat" description="ARM 3">
    <location>
        <begin position="412"/>
        <end position="451"/>
    </location>
</feature>
<feature type="repeat" description="ARM 4">
    <location>
        <begin position="454"/>
        <end position="495"/>
    </location>
</feature>
<feature type="repeat" description="ARM 5">
    <location>
        <begin position="501"/>
        <end position="541"/>
    </location>
</feature>
<feature type="repeat" description="ARM 6">
    <location>
        <begin position="543"/>
        <end position="582"/>
    </location>
</feature>
<feature type="repeat" description="ARM 7">
    <location>
        <begin position="648"/>
        <end position="687"/>
    </location>
</feature>
<feature type="region of interest" description="Disordered" evidence="2">
    <location>
        <begin position="1"/>
        <end position="24"/>
    </location>
</feature>
<feature type="region of interest" description="Disordered" evidence="2">
    <location>
        <begin position="48"/>
        <end position="71"/>
    </location>
</feature>
<feature type="region of interest" description="Disordered" evidence="2">
    <location>
        <begin position="732"/>
        <end position="818"/>
    </location>
</feature>
<feature type="compositionally biased region" description="Polar residues" evidence="2">
    <location>
        <begin position="1"/>
        <end position="21"/>
    </location>
</feature>
<feature type="compositionally biased region" description="Polar residues" evidence="2">
    <location>
        <begin position="48"/>
        <end position="66"/>
    </location>
</feature>
<protein>
    <recommendedName>
        <fullName>Catenin beta</fullName>
    </recommendedName>
    <alternativeName>
        <fullName>Beta-catenin</fullName>
    </alternativeName>
</protein>
<accession>P35224</accession>
<organism>
    <name type="scientific">Urechis caupo</name>
    <name type="common">Innkeeper worm</name>
    <name type="synonym">Spoonworm</name>
    <dbReference type="NCBI Taxonomy" id="6431"/>
    <lineage>
        <taxon>Eukaryota</taxon>
        <taxon>Metazoa</taxon>
        <taxon>Spiralia</taxon>
        <taxon>Lophotrochozoa</taxon>
        <taxon>Annelida</taxon>
        <taxon>Polychaeta</taxon>
        <taxon>Echiura</taxon>
        <taxon>Xenopneusta</taxon>
        <taxon>Urechidae</taxon>
        <taxon>Urechis</taxon>
    </lineage>
</organism>
<dbReference type="EMBL" id="L10355">
    <property type="protein sequence ID" value="AAA30330.1"/>
    <property type="molecule type" value="mRNA"/>
</dbReference>
<dbReference type="PIR" id="S33793">
    <property type="entry name" value="S33793"/>
</dbReference>
<dbReference type="SMR" id="P35224"/>
<dbReference type="GO" id="GO:0005737">
    <property type="term" value="C:cytoplasm"/>
    <property type="evidence" value="ECO:0007669"/>
    <property type="project" value="UniProtKB-SubCell"/>
</dbReference>
<dbReference type="GO" id="GO:0005856">
    <property type="term" value="C:cytoskeleton"/>
    <property type="evidence" value="ECO:0007669"/>
    <property type="project" value="UniProtKB-SubCell"/>
</dbReference>
<dbReference type="GO" id="GO:0045296">
    <property type="term" value="F:cadherin binding"/>
    <property type="evidence" value="ECO:0007669"/>
    <property type="project" value="InterPro"/>
</dbReference>
<dbReference type="GO" id="GO:0007155">
    <property type="term" value="P:cell adhesion"/>
    <property type="evidence" value="ECO:0007669"/>
    <property type="project" value="UniProtKB-KW"/>
</dbReference>
<dbReference type="CDD" id="cd21726">
    <property type="entry name" value="CTNNAbd_dArm"/>
    <property type="match status" value="1"/>
</dbReference>
<dbReference type="FunFam" id="1.25.10.10:FF:000015">
    <property type="entry name" value="Catenin beta-1"/>
    <property type="match status" value="1"/>
</dbReference>
<dbReference type="Gene3D" id="1.25.10.10">
    <property type="entry name" value="Leucine-rich Repeat Variant"/>
    <property type="match status" value="1"/>
</dbReference>
<dbReference type="InterPro" id="IPR011989">
    <property type="entry name" value="ARM-like"/>
</dbReference>
<dbReference type="InterPro" id="IPR016024">
    <property type="entry name" value="ARM-type_fold"/>
</dbReference>
<dbReference type="InterPro" id="IPR000225">
    <property type="entry name" value="Armadillo"/>
</dbReference>
<dbReference type="InterPro" id="IPR013284">
    <property type="entry name" value="Beta-catenin"/>
</dbReference>
<dbReference type="PANTHER" id="PTHR45976">
    <property type="entry name" value="ARMADILLO SEGMENT POLARITY PROTEIN"/>
    <property type="match status" value="1"/>
</dbReference>
<dbReference type="Pfam" id="PF00514">
    <property type="entry name" value="Arm"/>
    <property type="match status" value="3"/>
</dbReference>
<dbReference type="PRINTS" id="PR01869">
    <property type="entry name" value="BCATNINFAMLY"/>
</dbReference>
<dbReference type="SMART" id="SM00185">
    <property type="entry name" value="ARM"/>
    <property type="match status" value="12"/>
</dbReference>
<dbReference type="SUPFAM" id="SSF48371">
    <property type="entry name" value="ARM repeat"/>
    <property type="match status" value="1"/>
</dbReference>
<dbReference type="PROSITE" id="PS50176">
    <property type="entry name" value="ARM_REPEAT"/>
    <property type="match status" value="9"/>
</dbReference>
<keyword id="KW-0130">Cell adhesion</keyword>
<keyword id="KW-0963">Cytoplasm</keyword>
<keyword id="KW-0206">Cytoskeleton</keyword>
<keyword id="KW-0677">Repeat</keyword>